<dbReference type="EMBL" id="AL049660">
    <property type="protein sequence ID" value="CAB41179.1"/>
    <property type="molecule type" value="Genomic_DNA"/>
</dbReference>
<dbReference type="EMBL" id="CP002686">
    <property type="protein sequence ID" value="AEE79695.1"/>
    <property type="molecule type" value="Genomic_DNA"/>
</dbReference>
<dbReference type="EMBL" id="CP002686">
    <property type="protein sequence ID" value="AEE79696.1"/>
    <property type="molecule type" value="Genomic_DNA"/>
</dbReference>
<dbReference type="EMBL" id="CP002686">
    <property type="protein sequence ID" value="AEE79697.1"/>
    <property type="molecule type" value="Genomic_DNA"/>
</dbReference>
<dbReference type="EMBL" id="CP002686">
    <property type="protein sequence ID" value="ANM63888.1"/>
    <property type="molecule type" value="Genomic_DNA"/>
</dbReference>
<dbReference type="EMBL" id="AF372966">
    <property type="protein sequence ID" value="AAK50103.1"/>
    <property type="molecule type" value="mRNA"/>
</dbReference>
<dbReference type="EMBL" id="BT002229">
    <property type="protein sequence ID" value="AAN72240.1"/>
    <property type="molecule type" value="mRNA"/>
</dbReference>
<dbReference type="EMBL" id="AK317236">
    <property type="protein sequence ID" value="BAH19917.1"/>
    <property type="molecule type" value="mRNA"/>
</dbReference>
<dbReference type="EMBL" id="AK317514">
    <property type="protein sequence ID" value="BAH20179.1"/>
    <property type="molecule type" value="mRNA"/>
</dbReference>
<dbReference type="PIR" id="T06744">
    <property type="entry name" value="T06744"/>
</dbReference>
<dbReference type="RefSeq" id="NP_001030879.1">
    <property type="nucleotide sequence ID" value="NM_001035802.1"/>
</dbReference>
<dbReference type="RefSeq" id="NP_001030880.1">
    <property type="nucleotide sequence ID" value="NM_001035803.1"/>
</dbReference>
<dbReference type="RefSeq" id="NP_001319784.1">
    <property type="nucleotide sequence ID" value="NM_001339885.1"/>
</dbReference>
<dbReference type="RefSeq" id="NP_191335.1">
    <property type="nucleotide sequence ID" value="NM_115636.1"/>
</dbReference>
<dbReference type="SMR" id="Q9SVZ0"/>
<dbReference type="STRING" id="3702.Q9SVZ0"/>
<dbReference type="PaxDb" id="3702-AT3G57760.2"/>
<dbReference type="EnsemblPlants" id="AT3G57760.1">
    <property type="protein sequence ID" value="AT3G57760.1"/>
    <property type="gene ID" value="AT3G57760"/>
</dbReference>
<dbReference type="EnsemblPlants" id="AT3G57760.2">
    <property type="protein sequence ID" value="AT3G57760.2"/>
    <property type="gene ID" value="AT3G57760"/>
</dbReference>
<dbReference type="EnsemblPlants" id="AT3G57760.3">
    <property type="protein sequence ID" value="AT3G57760.3"/>
    <property type="gene ID" value="AT3G57760"/>
</dbReference>
<dbReference type="EnsemblPlants" id="AT3G57760.4">
    <property type="protein sequence ID" value="AT3G57760.4"/>
    <property type="gene ID" value="AT3G57760"/>
</dbReference>
<dbReference type="GeneID" id="824945"/>
<dbReference type="Gramene" id="AT3G57760.1">
    <property type="protein sequence ID" value="AT3G57760.1"/>
    <property type="gene ID" value="AT3G57760"/>
</dbReference>
<dbReference type="Gramene" id="AT3G57760.2">
    <property type="protein sequence ID" value="AT3G57760.2"/>
    <property type="gene ID" value="AT3G57760"/>
</dbReference>
<dbReference type="Gramene" id="AT3G57760.3">
    <property type="protein sequence ID" value="AT3G57760.3"/>
    <property type="gene ID" value="AT3G57760"/>
</dbReference>
<dbReference type="Gramene" id="AT3G57760.4">
    <property type="protein sequence ID" value="AT3G57760.4"/>
    <property type="gene ID" value="AT3G57760"/>
</dbReference>
<dbReference type="KEGG" id="ath:AT3G57760"/>
<dbReference type="Araport" id="AT3G57760"/>
<dbReference type="TAIR" id="AT3G57760">
    <property type="gene designation" value="ZRK6"/>
</dbReference>
<dbReference type="eggNOG" id="KOG1187">
    <property type="taxonomic scope" value="Eukaryota"/>
</dbReference>
<dbReference type="HOGENOM" id="CLU_000288_21_4_1"/>
<dbReference type="InParanoid" id="Q9SVZ0"/>
<dbReference type="OMA" id="CCDGKCN"/>
<dbReference type="PhylomeDB" id="Q9SVZ0"/>
<dbReference type="PRO" id="PR:Q9SVZ0"/>
<dbReference type="Proteomes" id="UP000006548">
    <property type="component" value="Chromosome 3"/>
</dbReference>
<dbReference type="ExpressionAtlas" id="Q9SVZ0">
    <property type="expression patterns" value="baseline and differential"/>
</dbReference>
<dbReference type="GO" id="GO:0005524">
    <property type="term" value="F:ATP binding"/>
    <property type="evidence" value="ECO:0007669"/>
    <property type="project" value="UniProtKB-KW"/>
</dbReference>
<dbReference type="GO" id="GO:0004672">
    <property type="term" value="F:protein kinase activity"/>
    <property type="evidence" value="ECO:0007669"/>
    <property type="project" value="InterPro"/>
</dbReference>
<dbReference type="GO" id="GO:0007166">
    <property type="term" value="P:cell surface receptor signaling pathway"/>
    <property type="evidence" value="ECO:0007669"/>
    <property type="project" value="InterPro"/>
</dbReference>
<dbReference type="GO" id="GO:0009266">
    <property type="term" value="P:response to temperature stimulus"/>
    <property type="evidence" value="ECO:0000270"/>
    <property type="project" value="UniProtKB"/>
</dbReference>
<dbReference type="FunFam" id="3.30.200.20:FF:000515">
    <property type="entry name" value="Inactive serine/threonine-protein kinase"/>
    <property type="match status" value="1"/>
</dbReference>
<dbReference type="Gene3D" id="3.30.200.20">
    <property type="entry name" value="Phosphorylase Kinase, domain 1"/>
    <property type="match status" value="1"/>
</dbReference>
<dbReference type="Gene3D" id="1.10.510.10">
    <property type="entry name" value="Transferase(Phosphotransferase) domain 1"/>
    <property type="match status" value="1"/>
</dbReference>
<dbReference type="InterPro" id="IPR011009">
    <property type="entry name" value="Kinase-like_dom_sf"/>
</dbReference>
<dbReference type="InterPro" id="IPR000719">
    <property type="entry name" value="Prot_kinase_dom"/>
</dbReference>
<dbReference type="InterPro" id="IPR001245">
    <property type="entry name" value="Ser-Thr/Tyr_kinase_cat_dom"/>
</dbReference>
<dbReference type="InterPro" id="IPR045274">
    <property type="entry name" value="WAK-like"/>
</dbReference>
<dbReference type="PANTHER" id="PTHR27005:SF175">
    <property type="entry name" value="NON-FUNCTIONAL PSEUDOKINASE ZRK6"/>
    <property type="match status" value="1"/>
</dbReference>
<dbReference type="PANTHER" id="PTHR27005">
    <property type="entry name" value="WALL-ASSOCIATED RECEPTOR KINASE-LIKE 21"/>
    <property type="match status" value="1"/>
</dbReference>
<dbReference type="Pfam" id="PF07714">
    <property type="entry name" value="PK_Tyr_Ser-Thr"/>
    <property type="match status" value="1"/>
</dbReference>
<dbReference type="SUPFAM" id="SSF56112">
    <property type="entry name" value="Protein kinase-like (PK-like)"/>
    <property type="match status" value="1"/>
</dbReference>
<dbReference type="PROSITE" id="PS50011">
    <property type="entry name" value="PROTEIN_KINASE_DOM"/>
    <property type="match status" value="1"/>
</dbReference>
<evidence type="ECO:0000255" key="1">
    <source>
        <dbReference type="PROSITE-ProRule" id="PRU00159"/>
    </source>
</evidence>
<evidence type="ECO:0000269" key="2">
    <source>
    </source>
</evidence>
<evidence type="ECO:0000269" key="3">
    <source>
    </source>
</evidence>
<evidence type="ECO:0000303" key="4">
    <source>
    </source>
</evidence>
<evidence type="ECO:0000303" key="5">
    <source>
    </source>
</evidence>
<evidence type="ECO:0000305" key="6"/>
<evidence type="ECO:0000312" key="7">
    <source>
        <dbReference type="Araport" id="AT3G57760"/>
    </source>
</evidence>
<evidence type="ECO:0000312" key="8">
    <source>
        <dbReference type="EMBL" id="CAB41179.1"/>
    </source>
</evidence>
<protein>
    <recommendedName>
        <fullName evidence="4 5">Non-functional pseudokinase ZRK6</fullName>
    </recommendedName>
</protein>
<sequence>MDWLRTKRIRAKKRKRNVKENGEVVLKELIECCDGKCNPIKNFSYDQIIKATNNFCQSNRASRIDVYYRCYKGMLDDRPVLIKKGKYTLDMKEICRDIAISSMVSGHKNFLKLLGCCLEFTPPVLVFEYAEVITLGPLLTSHPGYLRRIKIAREVANALTYLHTAFSRVFIHSNLDPFTIFLDGNGVAKLGNFCNCITIPEGETFVHDDTLQKYHELRHNTLKGTHGLGVCNLPVIDPDYKSTGKVTTKTDMHSFGGFMLALVQIREVDDELSLSSDMLRALADLFIKPYDDVRYVHFPLHHHVSKILRKFGYAEVVDSDMSEVAAWPIKAFLRLALRCIGCKLGDPLSSMIQVTKELRLIEKSAYYPSNNRSQMSSI</sequence>
<feature type="chain" id="PRO_0000449493" description="Non-functional pseudokinase ZRK6">
    <location>
        <begin position="1"/>
        <end position="378"/>
    </location>
</feature>
<feature type="domain" description="Protein kinase" evidence="1">
    <location>
        <begin position="34"/>
        <end position="378"/>
    </location>
</feature>
<feature type="binding site" evidence="1">
    <location>
        <begin position="40"/>
        <end position="48"/>
    </location>
    <ligand>
        <name>ATP</name>
        <dbReference type="ChEBI" id="CHEBI:30616"/>
    </ligand>
</feature>
<feature type="binding site" evidence="1">
    <location>
        <position position="83"/>
    </location>
    <ligand>
        <name>ATP</name>
        <dbReference type="ChEBI" id="CHEBI:30616"/>
    </ligand>
</feature>
<feature type="sequence conflict" description="In Ref. 4; BAH19917." evidence="6" ref="4">
    <original>F</original>
    <variation>L</variation>
    <location>
        <position position="55"/>
    </location>
</feature>
<feature type="sequence conflict" description="In Ref. 4; BAH20179." evidence="6" ref="4">
    <original>D</original>
    <variation>G</variation>
    <location>
        <position position="209"/>
    </location>
</feature>
<feature type="sequence conflict" description="In Ref. 4; BAH19917." evidence="6" ref="4">
    <original>K</original>
    <variation>R</variation>
    <location>
        <position position="249"/>
    </location>
</feature>
<accession>Q9SVZ0</accession>
<accession>B9DGQ0</accession>
<accession>B9DHG2</accession>
<keyword id="KW-0067">ATP-binding</keyword>
<keyword id="KW-0547">Nucleotide-binding</keyword>
<keyword id="KW-1185">Reference proteome</keyword>
<name>ZRK6_ARATH</name>
<gene>
    <name evidence="4 5" type="primary">ZRK6</name>
    <name evidence="7" type="ordered locus">At3g57760</name>
    <name evidence="8" type="ORF">F15B8.50</name>
</gene>
<proteinExistence type="evidence at protein level"/>
<organism>
    <name type="scientific">Arabidopsis thaliana</name>
    <name type="common">Mouse-ear cress</name>
    <dbReference type="NCBI Taxonomy" id="3702"/>
    <lineage>
        <taxon>Eukaryota</taxon>
        <taxon>Viridiplantae</taxon>
        <taxon>Streptophyta</taxon>
        <taxon>Embryophyta</taxon>
        <taxon>Tracheophyta</taxon>
        <taxon>Spermatophyta</taxon>
        <taxon>Magnoliopsida</taxon>
        <taxon>eudicotyledons</taxon>
        <taxon>Gunneridae</taxon>
        <taxon>Pentapetalae</taxon>
        <taxon>rosids</taxon>
        <taxon>malvids</taxon>
        <taxon>Brassicales</taxon>
        <taxon>Brassicaceae</taxon>
        <taxon>Camelineae</taxon>
        <taxon>Arabidopsis</taxon>
    </lineage>
</organism>
<reference key="1">
    <citation type="journal article" date="2000" name="Nature">
        <title>Sequence and analysis of chromosome 3 of the plant Arabidopsis thaliana.</title>
        <authorList>
            <person name="Salanoubat M."/>
            <person name="Lemcke K."/>
            <person name="Rieger M."/>
            <person name="Ansorge W."/>
            <person name="Unseld M."/>
            <person name="Fartmann B."/>
            <person name="Valle G."/>
            <person name="Bloecker H."/>
            <person name="Perez-Alonso M."/>
            <person name="Obermaier B."/>
            <person name="Delseny M."/>
            <person name="Boutry M."/>
            <person name="Grivell L.A."/>
            <person name="Mache R."/>
            <person name="Puigdomenech P."/>
            <person name="De Simone V."/>
            <person name="Choisne N."/>
            <person name="Artiguenave F."/>
            <person name="Robert C."/>
            <person name="Brottier P."/>
            <person name="Wincker P."/>
            <person name="Cattolico L."/>
            <person name="Weissenbach J."/>
            <person name="Saurin W."/>
            <person name="Quetier F."/>
            <person name="Schaefer M."/>
            <person name="Mueller-Auer S."/>
            <person name="Gabel C."/>
            <person name="Fuchs M."/>
            <person name="Benes V."/>
            <person name="Wurmbach E."/>
            <person name="Drzonek H."/>
            <person name="Erfle H."/>
            <person name="Jordan N."/>
            <person name="Bangert S."/>
            <person name="Wiedelmann R."/>
            <person name="Kranz H."/>
            <person name="Voss H."/>
            <person name="Holland R."/>
            <person name="Brandt P."/>
            <person name="Nyakatura G."/>
            <person name="Vezzi A."/>
            <person name="D'Angelo M."/>
            <person name="Pallavicini A."/>
            <person name="Toppo S."/>
            <person name="Simionati B."/>
            <person name="Conrad A."/>
            <person name="Hornischer K."/>
            <person name="Kauer G."/>
            <person name="Loehnert T.-H."/>
            <person name="Nordsiek G."/>
            <person name="Reichelt J."/>
            <person name="Scharfe M."/>
            <person name="Schoen O."/>
            <person name="Bargues M."/>
            <person name="Terol J."/>
            <person name="Climent J."/>
            <person name="Navarro P."/>
            <person name="Collado C."/>
            <person name="Perez-Perez A."/>
            <person name="Ottenwaelder B."/>
            <person name="Duchemin D."/>
            <person name="Cooke R."/>
            <person name="Laudie M."/>
            <person name="Berger-Llauro C."/>
            <person name="Purnelle B."/>
            <person name="Masuy D."/>
            <person name="de Haan M."/>
            <person name="Maarse A.C."/>
            <person name="Alcaraz J.-P."/>
            <person name="Cottet A."/>
            <person name="Casacuberta E."/>
            <person name="Monfort A."/>
            <person name="Argiriou A."/>
            <person name="Flores M."/>
            <person name="Liguori R."/>
            <person name="Vitale D."/>
            <person name="Mannhaupt G."/>
            <person name="Haase D."/>
            <person name="Schoof H."/>
            <person name="Rudd S."/>
            <person name="Zaccaria P."/>
            <person name="Mewes H.-W."/>
            <person name="Mayer K.F.X."/>
            <person name="Kaul S."/>
            <person name="Town C.D."/>
            <person name="Koo H.L."/>
            <person name="Tallon L.J."/>
            <person name="Jenkins J."/>
            <person name="Rooney T."/>
            <person name="Rizzo M."/>
            <person name="Walts A."/>
            <person name="Utterback T."/>
            <person name="Fujii C.Y."/>
            <person name="Shea T.P."/>
            <person name="Creasy T.H."/>
            <person name="Haas B."/>
            <person name="Maiti R."/>
            <person name="Wu D."/>
            <person name="Peterson J."/>
            <person name="Van Aken S."/>
            <person name="Pai G."/>
            <person name="Militscher J."/>
            <person name="Sellers P."/>
            <person name="Gill J.E."/>
            <person name="Feldblyum T.V."/>
            <person name="Preuss D."/>
            <person name="Lin X."/>
            <person name="Nierman W.C."/>
            <person name="Salzberg S.L."/>
            <person name="White O."/>
            <person name="Venter J.C."/>
            <person name="Fraser C.M."/>
            <person name="Kaneko T."/>
            <person name="Nakamura Y."/>
            <person name="Sato S."/>
            <person name="Kato T."/>
            <person name="Asamizu E."/>
            <person name="Sasamoto S."/>
            <person name="Kimura T."/>
            <person name="Idesawa K."/>
            <person name="Kawashima K."/>
            <person name="Kishida Y."/>
            <person name="Kiyokawa C."/>
            <person name="Kohara M."/>
            <person name="Matsumoto M."/>
            <person name="Matsuno A."/>
            <person name="Muraki A."/>
            <person name="Nakayama S."/>
            <person name="Nakazaki N."/>
            <person name="Shinpo S."/>
            <person name="Takeuchi C."/>
            <person name="Wada T."/>
            <person name="Watanabe A."/>
            <person name="Yamada M."/>
            <person name="Yasuda M."/>
            <person name="Tabata S."/>
        </authorList>
    </citation>
    <scope>NUCLEOTIDE SEQUENCE [LARGE SCALE GENOMIC DNA]</scope>
    <source>
        <strain>cv. Columbia</strain>
    </source>
</reference>
<reference key="2">
    <citation type="journal article" date="2017" name="Plant J.">
        <title>Araport11: a complete reannotation of the Arabidopsis thaliana reference genome.</title>
        <authorList>
            <person name="Cheng C.Y."/>
            <person name="Krishnakumar V."/>
            <person name="Chan A.P."/>
            <person name="Thibaud-Nissen F."/>
            <person name="Schobel S."/>
            <person name="Town C.D."/>
        </authorList>
    </citation>
    <scope>GENOME REANNOTATION</scope>
    <source>
        <strain>cv. Columbia</strain>
    </source>
</reference>
<reference key="3">
    <citation type="journal article" date="2003" name="Science">
        <title>Empirical analysis of transcriptional activity in the Arabidopsis genome.</title>
        <authorList>
            <person name="Yamada K."/>
            <person name="Lim J."/>
            <person name="Dale J.M."/>
            <person name="Chen H."/>
            <person name="Shinn P."/>
            <person name="Palm C.J."/>
            <person name="Southwick A.M."/>
            <person name="Wu H.C."/>
            <person name="Kim C.J."/>
            <person name="Nguyen M."/>
            <person name="Pham P.K."/>
            <person name="Cheuk R.F."/>
            <person name="Karlin-Newmann G."/>
            <person name="Liu S.X."/>
            <person name="Lam B."/>
            <person name="Sakano H."/>
            <person name="Wu T."/>
            <person name="Yu G."/>
            <person name="Miranda M."/>
            <person name="Quach H.L."/>
            <person name="Tripp M."/>
            <person name="Chang C.H."/>
            <person name="Lee J.M."/>
            <person name="Toriumi M.J."/>
            <person name="Chan M.M."/>
            <person name="Tang C.C."/>
            <person name="Onodera C.S."/>
            <person name="Deng J.M."/>
            <person name="Akiyama K."/>
            <person name="Ansari Y."/>
            <person name="Arakawa T."/>
            <person name="Banh J."/>
            <person name="Banno F."/>
            <person name="Bowser L."/>
            <person name="Brooks S.Y."/>
            <person name="Carninci P."/>
            <person name="Chao Q."/>
            <person name="Choy N."/>
            <person name="Enju A."/>
            <person name="Goldsmith A.D."/>
            <person name="Gurjal M."/>
            <person name="Hansen N.F."/>
            <person name="Hayashizaki Y."/>
            <person name="Johnson-Hopson C."/>
            <person name="Hsuan V.W."/>
            <person name="Iida K."/>
            <person name="Karnes M."/>
            <person name="Khan S."/>
            <person name="Koesema E."/>
            <person name="Ishida J."/>
            <person name="Jiang P.X."/>
            <person name="Jones T."/>
            <person name="Kawai J."/>
            <person name="Kamiya A."/>
            <person name="Meyers C."/>
            <person name="Nakajima M."/>
            <person name="Narusaka M."/>
            <person name="Seki M."/>
            <person name="Sakurai T."/>
            <person name="Satou M."/>
            <person name="Tamse R."/>
            <person name="Vaysberg M."/>
            <person name="Wallender E.K."/>
            <person name="Wong C."/>
            <person name="Yamamura Y."/>
            <person name="Yuan S."/>
            <person name="Shinozaki K."/>
            <person name="Davis R.W."/>
            <person name="Theologis A."/>
            <person name="Ecker J.R."/>
        </authorList>
    </citation>
    <scope>NUCLEOTIDE SEQUENCE [LARGE SCALE MRNA]</scope>
    <source>
        <strain>cv. Columbia</strain>
    </source>
</reference>
<reference key="4">
    <citation type="journal article" date="2009" name="DNA Res.">
        <title>Analysis of multiple occurrences of alternative splicing events in Arabidopsis thaliana using novel sequenced full-length cDNAs.</title>
        <authorList>
            <person name="Iida K."/>
            <person name="Fukami-Kobayashi K."/>
            <person name="Toyoda A."/>
            <person name="Sakaki Y."/>
            <person name="Kobayashi M."/>
            <person name="Seki M."/>
            <person name="Shinozaki K."/>
        </authorList>
    </citation>
    <scope>NUCLEOTIDE SEQUENCE [LARGE SCALE MRNA]</scope>
    <source>
        <strain>cv. Columbia</strain>
        <tissue>Rosette leaf</tissue>
    </source>
</reference>
<reference key="5">
    <citation type="journal article" date="2015" name="Cell Host Microbe">
        <title>The decoy substrate of a pathogen effector and a pseudokinase specify pathogen-induced modified-self recognition and immunity in plants.</title>
        <authorList>
            <person name="Wang G."/>
            <person name="Roux B."/>
            <person name="Feng F."/>
            <person name="Guy E."/>
            <person name="Li L."/>
            <person name="Li N."/>
            <person name="Zhang X."/>
            <person name="Lautier M."/>
            <person name="Jardinaud M.-F."/>
            <person name="Chabannes M."/>
            <person name="Arlat M."/>
            <person name="Chen S."/>
            <person name="He C."/>
            <person name="Noel L.D."/>
            <person name="Zhou J.-M."/>
        </authorList>
    </citation>
    <scope>INTERACTION WITH RPP13L4/ZAR1</scope>
    <scope>GENE FAMILY</scope>
    <scope>NOMENCLATURE</scope>
    <source>
        <strain>cv. Columbia</strain>
    </source>
</reference>
<reference key="6">
    <citation type="journal article" date="2017" name="New Phytol.">
        <title>Arabidopsis ZED1-related kinases mediate the temperature-sensitive intersection of immune response and growth homeostasis.</title>
        <authorList>
            <person name="Wang Z."/>
            <person name="Cui D."/>
            <person name="Liu J."/>
            <person name="Zhao J."/>
            <person name="Liu C."/>
            <person name="Xin W."/>
            <person name="Li Y."/>
            <person name="Liu N."/>
            <person name="Ren D."/>
            <person name="Tang D."/>
            <person name="Hu Y."/>
        </authorList>
    </citation>
    <scope>INDUCTION BY ELEVATED TEMPERATURE</scope>
    <source>
        <strain>cv. Columbia</strain>
        <strain>cv. Landsberg erecta</strain>
    </source>
</reference>
<comment type="subunit">
    <text evidence="2">Interacts with RPP13L4/ZAR1.</text>
</comment>
<comment type="induction">
    <text evidence="3">Induced by elevated temperature (e.g. at 25 degrees Celsius).</text>
</comment>
<comment type="domain">
    <text evidence="1">The protein kinase domain is predicted to be catalytically inactive.</text>
</comment>
<comment type="similarity">
    <text evidence="6">Belongs to the protein kinase superfamily. Ser/Thr protein kinase family. ZRK subfamily.</text>
</comment>